<gene>
    <name type="primary">rps8</name>
</gene>
<evidence type="ECO:0000250" key="1"/>
<evidence type="ECO:0000305" key="2"/>
<proteinExistence type="inferred from homology"/>
<accession>Q9MUU6</accession>
<comment type="function">
    <text evidence="1">One of the primary rRNA binding proteins, it binds directly to 16S rRNA central domain where it helps coordinate assembly of the platform of the 30S subunit.</text>
</comment>
<comment type="subunit">
    <text evidence="1">Part of the 30S ribosomal subunit.</text>
</comment>
<comment type="subcellular location">
    <subcellularLocation>
        <location>Plastid</location>
        <location>Chloroplast</location>
    </subcellularLocation>
</comment>
<comment type="similarity">
    <text evidence="2">Belongs to the universal ribosomal protein uS8 family.</text>
</comment>
<feature type="chain" id="PRO_0000126577" description="Small ribosomal subunit protein uS8c">
    <location>
        <begin position="1"/>
        <end position="133"/>
    </location>
</feature>
<organism>
    <name type="scientific">Mesostigma viride</name>
    <name type="common">Green alga</name>
    <dbReference type="NCBI Taxonomy" id="41882"/>
    <lineage>
        <taxon>Eukaryota</taxon>
        <taxon>Viridiplantae</taxon>
        <taxon>Streptophyta</taxon>
        <taxon>Mesostigmatophyceae</taxon>
        <taxon>Mesostigmatales</taxon>
        <taxon>Mesostigmataceae</taxon>
        <taxon>Mesostigma</taxon>
    </lineage>
</organism>
<dbReference type="EMBL" id="AF166114">
    <property type="protein sequence ID" value="AAF43805.1"/>
    <property type="molecule type" value="Genomic_DNA"/>
</dbReference>
<dbReference type="RefSeq" id="NP_038364.1">
    <property type="nucleotide sequence ID" value="NC_002186.1"/>
</dbReference>
<dbReference type="SMR" id="Q9MUU6"/>
<dbReference type="GeneID" id="800895"/>
<dbReference type="GO" id="GO:0009507">
    <property type="term" value="C:chloroplast"/>
    <property type="evidence" value="ECO:0007669"/>
    <property type="project" value="UniProtKB-SubCell"/>
</dbReference>
<dbReference type="GO" id="GO:1990904">
    <property type="term" value="C:ribonucleoprotein complex"/>
    <property type="evidence" value="ECO:0007669"/>
    <property type="project" value="UniProtKB-KW"/>
</dbReference>
<dbReference type="GO" id="GO:0005840">
    <property type="term" value="C:ribosome"/>
    <property type="evidence" value="ECO:0007669"/>
    <property type="project" value="UniProtKB-KW"/>
</dbReference>
<dbReference type="GO" id="GO:0019843">
    <property type="term" value="F:rRNA binding"/>
    <property type="evidence" value="ECO:0007669"/>
    <property type="project" value="UniProtKB-UniRule"/>
</dbReference>
<dbReference type="GO" id="GO:0003735">
    <property type="term" value="F:structural constituent of ribosome"/>
    <property type="evidence" value="ECO:0007669"/>
    <property type="project" value="InterPro"/>
</dbReference>
<dbReference type="GO" id="GO:0006412">
    <property type="term" value="P:translation"/>
    <property type="evidence" value="ECO:0007669"/>
    <property type="project" value="UniProtKB-UniRule"/>
</dbReference>
<dbReference type="FunFam" id="3.30.1490.10:FF:000001">
    <property type="entry name" value="30S ribosomal protein S8"/>
    <property type="match status" value="1"/>
</dbReference>
<dbReference type="Gene3D" id="3.30.1370.30">
    <property type="match status" value="1"/>
</dbReference>
<dbReference type="Gene3D" id="3.30.1490.10">
    <property type="match status" value="1"/>
</dbReference>
<dbReference type="HAMAP" id="MF_01302_B">
    <property type="entry name" value="Ribosomal_uS8_B"/>
    <property type="match status" value="1"/>
</dbReference>
<dbReference type="InterPro" id="IPR000630">
    <property type="entry name" value="Ribosomal_uS8"/>
</dbReference>
<dbReference type="InterPro" id="IPR047863">
    <property type="entry name" value="Ribosomal_uS8_CS"/>
</dbReference>
<dbReference type="InterPro" id="IPR035987">
    <property type="entry name" value="Ribosomal_uS8_sf"/>
</dbReference>
<dbReference type="NCBIfam" id="NF001109">
    <property type="entry name" value="PRK00136.1"/>
    <property type="match status" value="1"/>
</dbReference>
<dbReference type="PANTHER" id="PTHR11758">
    <property type="entry name" value="40S RIBOSOMAL PROTEIN S15A"/>
    <property type="match status" value="1"/>
</dbReference>
<dbReference type="Pfam" id="PF00410">
    <property type="entry name" value="Ribosomal_S8"/>
    <property type="match status" value="1"/>
</dbReference>
<dbReference type="SUPFAM" id="SSF56047">
    <property type="entry name" value="Ribosomal protein S8"/>
    <property type="match status" value="1"/>
</dbReference>
<dbReference type="PROSITE" id="PS00053">
    <property type="entry name" value="RIBOSOMAL_S8"/>
    <property type="match status" value="1"/>
</dbReference>
<protein>
    <recommendedName>
        <fullName evidence="2">Small ribosomal subunit protein uS8c</fullName>
    </recommendedName>
    <alternativeName>
        <fullName>30S ribosomal protein S8, chloroplastic</fullName>
    </alternativeName>
</protein>
<geneLocation type="chloroplast"/>
<reference key="1">
    <citation type="journal article" date="2000" name="Nature">
        <title>Ancestral chloroplast genome in Mesostigma viride reveals an early branch of green plant evolution.</title>
        <authorList>
            <person name="Lemieux C."/>
            <person name="Otis C."/>
            <person name="Turmel M."/>
        </authorList>
    </citation>
    <scope>NUCLEOTIDE SEQUENCE [LARGE SCALE GENOMIC DNA]</scope>
    <source>
        <strain>NIES-296 / KY-14 / CCMP 2046</strain>
    </source>
</reference>
<name>RR8_MESVI</name>
<sequence>MVNDTIADMITRIRNANLITQKQVAVIASNTNKGIAQCLLKEGFIESIEYNTNSSNNPELILSLKYQGKKRKPYITALQRVSKSGLRVYTSYKDIPKVLGGIGIAILSTSQGILTDKQARMQKIGGEILCYIW</sequence>
<keyword id="KW-0150">Chloroplast</keyword>
<keyword id="KW-0934">Plastid</keyword>
<keyword id="KW-0687">Ribonucleoprotein</keyword>
<keyword id="KW-0689">Ribosomal protein</keyword>
<keyword id="KW-0694">RNA-binding</keyword>
<keyword id="KW-0699">rRNA-binding</keyword>